<reference key="1">
    <citation type="journal article" date="2002" name="Nature">
        <title>The genome sequence of Schizosaccharomyces pombe.</title>
        <authorList>
            <person name="Wood V."/>
            <person name="Gwilliam R."/>
            <person name="Rajandream M.A."/>
            <person name="Lyne M.H."/>
            <person name="Lyne R."/>
            <person name="Stewart A."/>
            <person name="Sgouros J.G."/>
            <person name="Peat N."/>
            <person name="Hayles J."/>
            <person name="Baker S.G."/>
            <person name="Basham D."/>
            <person name="Bowman S."/>
            <person name="Brooks K."/>
            <person name="Brown D."/>
            <person name="Brown S."/>
            <person name="Chillingworth T."/>
            <person name="Churcher C.M."/>
            <person name="Collins M."/>
            <person name="Connor R."/>
            <person name="Cronin A."/>
            <person name="Davis P."/>
            <person name="Feltwell T."/>
            <person name="Fraser A."/>
            <person name="Gentles S."/>
            <person name="Goble A."/>
            <person name="Hamlin N."/>
            <person name="Harris D.E."/>
            <person name="Hidalgo J."/>
            <person name="Hodgson G."/>
            <person name="Holroyd S."/>
            <person name="Hornsby T."/>
            <person name="Howarth S."/>
            <person name="Huckle E.J."/>
            <person name="Hunt S."/>
            <person name="Jagels K."/>
            <person name="James K.D."/>
            <person name="Jones L."/>
            <person name="Jones M."/>
            <person name="Leather S."/>
            <person name="McDonald S."/>
            <person name="McLean J."/>
            <person name="Mooney P."/>
            <person name="Moule S."/>
            <person name="Mungall K.L."/>
            <person name="Murphy L.D."/>
            <person name="Niblett D."/>
            <person name="Odell C."/>
            <person name="Oliver K."/>
            <person name="O'Neil S."/>
            <person name="Pearson D."/>
            <person name="Quail M.A."/>
            <person name="Rabbinowitsch E."/>
            <person name="Rutherford K.M."/>
            <person name="Rutter S."/>
            <person name="Saunders D."/>
            <person name="Seeger K."/>
            <person name="Sharp S."/>
            <person name="Skelton J."/>
            <person name="Simmonds M.N."/>
            <person name="Squares R."/>
            <person name="Squares S."/>
            <person name="Stevens K."/>
            <person name="Taylor K."/>
            <person name="Taylor R.G."/>
            <person name="Tivey A."/>
            <person name="Walsh S.V."/>
            <person name="Warren T."/>
            <person name="Whitehead S."/>
            <person name="Woodward J.R."/>
            <person name="Volckaert G."/>
            <person name="Aert R."/>
            <person name="Robben J."/>
            <person name="Grymonprez B."/>
            <person name="Weltjens I."/>
            <person name="Vanstreels E."/>
            <person name="Rieger M."/>
            <person name="Schaefer M."/>
            <person name="Mueller-Auer S."/>
            <person name="Gabel C."/>
            <person name="Fuchs M."/>
            <person name="Duesterhoeft A."/>
            <person name="Fritzc C."/>
            <person name="Holzer E."/>
            <person name="Moestl D."/>
            <person name="Hilbert H."/>
            <person name="Borzym K."/>
            <person name="Langer I."/>
            <person name="Beck A."/>
            <person name="Lehrach H."/>
            <person name="Reinhardt R."/>
            <person name="Pohl T.M."/>
            <person name="Eger P."/>
            <person name="Zimmermann W."/>
            <person name="Wedler H."/>
            <person name="Wambutt R."/>
            <person name="Purnelle B."/>
            <person name="Goffeau A."/>
            <person name="Cadieu E."/>
            <person name="Dreano S."/>
            <person name="Gloux S."/>
            <person name="Lelaure V."/>
            <person name="Mottier S."/>
            <person name="Galibert F."/>
            <person name="Aves S.J."/>
            <person name="Xiang Z."/>
            <person name="Hunt C."/>
            <person name="Moore K."/>
            <person name="Hurst S.M."/>
            <person name="Lucas M."/>
            <person name="Rochet M."/>
            <person name="Gaillardin C."/>
            <person name="Tallada V.A."/>
            <person name="Garzon A."/>
            <person name="Thode G."/>
            <person name="Daga R.R."/>
            <person name="Cruzado L."/>
            <person name="Jimenez J."/>
            <person name="Sanchez M."/>
            <person name="del Rey F."/>
            <person name="Benito J."/>
            <person name="Dominguez A."/>
            <person name="Revuelta J.L."/>
            <person name="Moreno S."/>
            <person name="Armstrong J."/>
            <person name="Forsburg S.L."/>
            <person name="Cerutti L."/>
            <person name="Lowe T."/>
            <person name="McCombie W.R."/>
            <person name="Paulsen I."/>
            <person name="Potashkin J."/>
            <person name="Shpakovski G.V."/>
            <person name="Ussery D."/>
            <person name="Barrell B.G."/>
            <person name="Nurse P."/>
        </authorList>
    </citation>
    <scope>NUCLEOTIDE SEQUENCE [LARGE SCALE GENOMIC DNA]</scope>
    <source>
        <strain>972 / ATCC 24843</strain>
    </source>
</reference>
<reference key="2">
    <citation type="journal article" date="2000" name="Genes Cells">
        <title>Large-scale screening of intracellular protein localization in living fission yeast cells by the use of a GFP-fusion genomic DNA library.</title>
        <authorList>
            <person name="Ding D.-Q."/>
            <person name="Tomita Y."/>
            <person name="Yamamoto A."/>
            <person name="Chikashige Y."/>
            <person name="Haraguchi T."/>
            <person name="Hiraoka Y."/>
        </authorList>
    </citation>
    <scope>NUCLEOTIDE SEQUENCE [LARGE SCALE GENOMIC DNA] OF 78-253</scope>
    <scope>SUBCELLULAR LOCATION</scope>
    <source>
        <strain>ATCC 38364 / 968</strain>
    </source>
</reference>
<reference key="3">
    <citation type="journal article" date="1998" name="Nucleic Acids Res.">
        <title>The fission yeast prp10(+) gene involved in pre-mRNA splicing encodes a homologue of highly conserved splicing factor, SAP155.</title>
        <authorList>
            <person name="Habara Y."/>
            <person name="Urushiyama S."/>
            <person name="Tani T."/>
            <person name="Ohshima Y."/>
        </authorList>
    </citation>
    <scope>FUNCTION</scope>
    <scope>ALTERNATIVE SPLICING</scope>
    <scope>SUBCELLULAR LOCATION</scope>
</reference>
<reference key="4">
    <citation type="journal article" date="2002" name="Mol. Cell. Biol.">
        <title>Proteomics analysis reveals stable multiprotein complexes in both fission and budding yeasts containing Myb-related Cdc5p/Cef1p, novel pre-mRNA splicing factors, and snRNAs.</title>
        <authorList>
            <person name="Ohi M.D."/>
            <person name="Link A.J."/>
            <person name="Ren L."/>
            <person name="Jennings J.L."/>
            <person name="McDonald W.H."/>
            <person name="Gould K.L."/>
        </authorList>
    </citation>
    <scope>IDENTIFICATION IN THE CWF COMPLEX</scope>
    <scope>IDENTIFICATION BY MASS SPECTROMETRY</scope>
</reference>
<reference key="5">
    <citation type="journal article" date="2006" name="Nat. Biotechnol.">
        <title>ORFeome cloning and global analysis of protein localization in the fission yeast Schizosaccharomyces pombe.</title>
        <authorList>
            <person name="Matsuyama A."/>
            <person name="Arai R."/>
            <person name="Yashiroda Y."/>
            <person name="Shirai A."/>
            <person name="Kamata A."/>
            <person name="Sekido S."/>
            <person name="Kobayashi Y."/>
            <person name="Hashimoto A."/>
            <person name="Hamamoto M."/>
            <person name="Hiraoka Y."/>
            <person name="Horinouchi S."/>
            <person name="Yoshida M."/>
        </authorList>
    </citation>
    <scope>SUBCELLULAR LOCATION [LARGE SCALE ANALYSIS]</scope>
</reference>
<comment type="function">
    <text evidence="1 6">Contacts pre-mRNA on both sides of the branch site early in spliceosome assembly.</text>
</comment>
<comment type="subunit">
    <text evidence="4">Belongs to the 40S cdc5-associated complex (or cwf complex), a spliceosome sub-complex reminiscent of a late-stage spliceosome composed of the U2, U5 and U6 snRNAs and at least brr2, cdc5, cwf2/prp3, cwf3/syf1, cwf4/syf3, cwf5/ecm2, spp42/cwf6, cwf7/spf27, cwf8, cwf9, cwf10, cwf11, cwf12, prp45/cwf13, cwf14, cwf15, cwf16, cwf17, cwf18, cwf19, cwf20, cwf21, cwf22, cwf23, cwf24, cwf25, cwf26, cyp7/cwf27, cwf28, cwf29/ist3, lea1, msl1, prp5/cwf1, prp10, prp12/sap130, prp17, prp22, sap61, sap62, sap114, sap145, slu7, smb1, smd1, smd3, smf1, smg1 and syf2.</text>
</comment>
<comment type="subcellular location">
    <subcellularLocation>
        <location evidence="3 5 6">Nucleus</location>
    </subcellularLocation>
</comment>
<comment type="alternative products">
    <event type="alternative splicing"/>
    <isoform>
        <id>Q10178-1</id>
        <name>A</name>
        <sequence type="displayed"/>
    </isoform>
    <isoform>
        <id>Q10178-2</id>
        <name>B</name>
        <sequence type="described" ref="VSP_042618"/>
    </isoform>
    <isoform>
        <id>Q10178-3</id>
        <name>E</name>
        <sequence type="described" ref="VSP_042618 VSP_042619"/>
    </isoform>
</comment>
<comment type="similarity">
    <text evidence="7">Belongs to the SF3B1 family.</text>
</comment>
<proteinExistence type="evidence at protein level"/>
<keyword id="KW-0025">Alternative splicing</keyword>
<keyword id="KW-0507">mRNA processing</keyword>
<keyword id="KW-0508">mRNA splicing</keyword>
<keyword id="KW-0539">Nucleus</keyword>
<keyword id="KW-1185">Reference proteome</keyword>
<keyword id="KW-0677">Repeat</keyword>
<keyword id="KW-0747">Spliceosome</keyword>
<feature type="chain" id="PRO_0000174326" description="U2 snRNP component prp10">
    <location>
        <begin position="1"/>
        <end position="1205"/>
    </location>
</feature>
<feature type="repeat" description="HEAT 1">
    <location>
        <begin position="393"/>
        <end position="429"/>
    </location>
</feature>
<feature type="repeat" description="HEAT 2">
    <location>
        <begin position="431"/>
        <end position="473"/>
    </location>
</feature>
<feature type="repeat" description="HEAT 3">
    <location>
        <begin position="475"/>
        <end position="505"/>
    </location>
</feature>
<feature type="repeat" description="HEAT 4">
    <location>
        <begin position="506"/>
        <end position="540"/>
    </location>
</feature>
<feature type="repeat" description="HEAT 5">
    <location>
        <begin position="541"/>
        <end position="578"/>
    </location>
</feature>
<feature type="repeat" description="HEAT 6">
    <location>
        <begin position="582"/>
        <end position="619"/>
    </location>
</feature>
<feature type="repeat" description="HEAT 7">
    <location>
        <begin position="665"/>
        <end position="702"/>
    </location>
</feature>
<feature type="repeat" description="HEAT 8">
    <location>
        <begin position="745"/>
        <end position="782"/>
    </location>
</feature>
<feature type="repeat" description="HEAT 9">
    <location>
        <begin position="828"/>
        <end position="865"/>
    </location>
</feature>
<feature type="repeat" description="HEAT 10">
    <location>
        <begin position="912"/>
        <end position="949"/>
    </location>
</feature>
<feature type="repeat" description="HEAT 11">
    <location>
        <begin position="954"/>
        <end position="991"/>
    </location>
</feature>
<feature type="repeat" description="HEAT 12">
    <location>
        <begin position="993"/>
        <end position="1024"/>
    </location>
</feature>
<feature type="repeat" description="HEAT 13">
    <location>
        <begin position="1025"/>
        <end position="1061"/>
    </location>
</feature>
<feature type="repeat" description="HEAT 14">
    <location>
        <begin position="1065"/>
        <end position="1102"/>
    </location>
</feature>
<feature type="repeat" description="HEAT 15">
    <location>
        <begin position="1107"/>
        <end position="1142"/>
    </location>
</feature>
<feature type="repeat" description="HEAT 16">
    <location>
        <begin position="1143"/>
        <end position="1179"/>
    </location>
</feature>
<feature type="region of interest" description="Disordered" evidence="2">
    <location>
        <begin position="39"/>
        <end position="58"/>
    </location>
</feature>
<feature type="region of interest" description="Disordered" evidence="2">
    <location>
        <begin position="122"/>
        <end position="175"/>
    </location>
</feature>
<feature type="region of interest" description="Disordered" evidence="2">
    <location>
        <begin position="202"/>
        <end position="254"/>
    </location>
</feature>
<feature type="compositionally biased region" description="Polar residues" evidence="2">
    <location>
        <begin position="44"/>
        <end position="58"/>
    </location>
</feature>
<feature type="compositionally biased region" description="Basic and acidic residues" evidence="2">
    <location>
        <begin position="130"/>
        <end position="153"/>
    </location>
</feature>
<feature type="splice variant" id="VSP_042618" description="In isoform B and isoform E." evidence="7">
    <location>
        <begin position="4"/>
        <end position="20"/>
    </location>
</feature>
<feature type="splice variant" id="VSP_042619" description="In isoform E." evidence="7">
    <location>
        <begin position="55"/>
        <end position="76"/>
    </location>
</feature>
<sequence length="1205" mass="137183">MSTGTYPYKMFKMDVTNLNKVEDVEIERLRAERELLRRQKEAAKNSSTNGSVNIEGTQDSNDLQYNAHLFKSSNPKEEYDSAIDVRNDISQDEDDYKRTNDVNDSYRLVRQYEAPKELLNEYADESYDPMQERQSKKQIQDRESDYQKQRYDRQLTPTRVDAFQPDGTQSNGRSYAEVMRQVELEKEERRVHMELNQRRREGTLKEVEEEESISDKKRELELNNTEISQKPKRSRWDQAPPSVTQVSTTKRRSRWDKAPENFTISEHVIENGISEDLINKEVNVVEEKLRPPVRLLTEEELNELLPSEGYAILEPPPGYLESIHPELLQKGTTLDTYHVPQEQELPLEKELPAALPTEIPGVGDLAFFKQEDVKYFGKLLKVEDEAKLTIAELRERKILRLLLKVKNGTPPMRKSALRQLTDQARDFGAAALFNQILPLLMERTLEDQERHLLVKVIDRILYKLDDLVRPFTHKILVVIEPLLIDEDYYARAEGREIISNLAKASGLAHMIATMRPDIDHVDEYVRNTTARAFSVVASALGVPALLPFLKAVCRSKKSWQARHTGVRIIQQIALLLGCSILPHLKNLVDCIGHGLEDEQQKVRIMTALSLSALAEAATPYGIEAFDSVLKPLWSGVQRHRGKSLAAFLKATGFIIPLMEPEYASHFTRRIMKILLREFNSPDEEMKKIVLKVVSQCASTDGVTPEYLRTDVLPEFFHCFWSRRMASDRRSYKQVVETTVVLAQQVGSRQIVERVVNNFKDESEPYRKMTAETVDKVIGSLGVSEIDERLEELLLDGVLFAFQEQSVEEKVILTCFSTVVNALGTRCKPYLPQIVSTILYRLNNKSANVREQAADLVSSITIVLKACGEEALMRKLGVVLYEYLGEEYPEVLGSILGAIKAIVSVVGMSSMQPPIRDLLPRLTPILRNRHEKVQENTIDLVGKIADRGSEYVSAREWMRICFELIDMLKAHKKSIRRAAVNTFGYISKAIGPQDVLATLLNNLKVQERQNRVCTTVAIAIVAETCMPFTVVPALMADYRTPEMNVQNGVLKSLAFMFEYIGEQARDYVYAITPLLADALMDRDAVHRQTAASVIKHLSLGCVGLGVEDAMIHLLNILWPNILEESPHVINAVREGIDGIRNCIGVGPIMAYLVQGLFHPSRKVRNTYWTSYNSAYVQSADAMVPYYPHVDDDQFNNYDMKTLHICI</sequence>
<evidence type="ECO:0000250" key="1"/>
<evidence type="ECO:0000256" key="2">
    <source>
        <dbReference type="SAM" id="MobiDB-lite"/>
    </source>
</evidence>
<evidence type="ECO:0000269" key="3">
    <source>
    </source>
</evidence>
<evidence type="ECO:0000269" key="4">
    <source>
    </source>
</evidence>
<evidence type="ECO:0000269" key="5">
    <source>
    </source>
</evidence>
<evidence type="ECO:0000269" key="6">
    <source>
    </source>
</evidence>
<evidence type="ECO:0000305" key="7"/>
<name>SF3B1_SCHPO</name>
<dbReference type="EMBL" id="CU329670">
    <property type="protein sequence ID" value="CAA93298.3"/>
    <property type="molecule type" value="Genomic_DNA"/>
</dbReference>
<dbReference type="EMBL" id="AB027815">
    <property type="protein sequence ID" value="BAA87119.1"/>
    <property type="molecule type" value="Genomic_DNA"/>
</dbReference>
<dbReference type="PIR" id="T38467">
    <property type="entry name" value="T38467"/>
</dbReference>
<dbReference type="RefSeq" id="NP_594538.2">
    <property type="nucleotide sequence ID" value="NM_001019967.2"/>
</dbReference>
<dbReference type="SMR" id="Q10178"/>
<dbReference type="BioGRID" id="278116">
    <property type="interactions" value="33"/>
</dbReference>
<dbReference type="FunCoup" id="Q10178">
    <property type="interactions" value="871"/>
</dbReference>
<dbReference type="IntAct" id="Q10178">
    <property type="interactions" value="4"/>
</dbReference>
<dbReference type="STRING" id="284812.Q10178"/>
<dbReference type="iPTMnet" id="Q10178"/>
<dbReference type="PaxDb" id="4896-SPAC27F1.09c.1"/>
<dbReference type="EnsemblFungi" id="SPAC27F1.09c.1">
    <molecule id="Q10178-3"/>
    <property type="protein sequence ID" value="SPAC27F1.09c.1:pep"/>
    <property type="gene ID" value="SPAC27F1.09c"/>
</dbReference>
<dbReference type="GeneID" id="2541619"/>
<dbReference type="KEGG" id="spo:2541619"/>
<dbReference type="PomBase" id="SPAC27F1.09c">
    <property type="gene designation" value="prp10"/>
</dbReference>
<dbReference type="eggNOG" id="KOG0213">
    <property type="taxonomic scope" value="Eukaryota"/>
</dbReference>
<dbReference type="HOGENOM" id="CLU_002242_0_1_1"/>
<dbReference type="InParanoid" id="Q10178"/>
<dbReference type="OMA" id="LVMNYVW"/>
<dbReference type="PRO" id="PR:Q10178"/>
<dbReference type="Proteomes" id="UP000002485">
    <property type="component" value="Chromosome I"/>
</dbReference>
<dbReference type="GO" id="GO:0071013">
    <property type="term" value="C:catalytic step 2 spliceosome"/>
    <property type="evidence" value="ECO:0000318"/>
    <property type="project" value="GO_Central"/>
</dbReference>
<dbReference type="GO" id="GO:0005634">
    <property type="term" value="C:nucleus"/>
    <property type="evidence" value="ECO:0000314"/>
    <property type="project" value="PomBase"/>
</dbReference>
<dbReference type="GO" id="GO:0071014">
    <property type="term" value="C:post-mRNA release spliceosomal complex"/>
    <property type="evidence" value="ECO:0000314"/>
    <property type="project" value="PomBase"/>
</dbReference>
<dbReference type="GO" id="GO:0005686">
    <property type="term" value="C:U2 snRNP"/>
    <property type="evidence" value="ECO:0000314"/>
    <property type="project" value="PomBase"/>
</dbReference>
<dbReference type="GO" id="GO:0071004">
    <property type="term" value="C:U2-type prespliceosome"/>
    <property type="evidence" value="ECO:0000318"/>
    <property type="project" value="GO_Central"/>
</dbReference>
<dbReference type="GO" id="GO:0003729">
    <property type="term" value="F:mRNA binding"/>
    <property type="evidence" value="ECO:0000318"/>
    <property type="project" value="GO_Central"/>
</dbReference>
<dbReference type="GO" id="GO:0045292">
    <property type="term" value="P:mRNA cis splicing, via spliceosome"/>
    <property type="evidence" value="ECO:0000315"/>
    <property type="project" value="PomBase"/>
</dbReference>
<dbReference type="GO" id="GO:0140727">
    <property type="term" value="P:siRNA-mediated pericentric heterochromatin formation"/>
    <property type="evidence" value="ECO:0000315"/>
    <property type="project" value="PomBase"/>
</dbReference>
<dbReference type="GO" id="GO:0000245">
    <property type="term" value="P:spliceosomal complex assembly"/>
    <property type="evidence" value="ECO:0000318"/>
    <property type="project" value="GO_Central"/>
</dbReference>
<dbReference type="FunFam" id="1.25.10.10:FF:000066">
    <property type="entry name" value="Splicing factor 3B subunit 1"/>
    <property type="match status" value="1"/>
</dbReference>
<dbReference type="FunFam" id="1.25.10.10:FF:000504">
    <property type="entry name" value="Splicing factor 3B subunit 1, putative"/>
    <property type="match status" value="1"/>
</dbReference>
<dbReference type="FunFam" id="1.25.10.10:FF:000073">
    <property type="entry name" value="Splicing factor 3b, subunit 1"/>
    <property type="match status" value="1"/>
</dbReference>
<dbReference type="Gene3D" id="1.25.10.10">
    <property type="entry name" value="Leucine-rich Repeat Variant"/>
    <property type="match status" value="3"/>
</dbReference>
<dbReference type="InterPro" id="IPR011989">
    <property type="entry name" value="ARM-like"/>
</dbReference>
<dbReference type="InterPro" id="IPR016024">
    <property type="entry name" value="ARM-type_fold"/>
</dbReference>
<dbReference type="InterPro" id="IPR054573">
    <property type="entry name" value="PP2A/SF3B1-like_HEAT"/>
</dbReference>
<dbReference type="InterPro" id="IPR015016">
    <property type="entry name" value="SF3b_su1"/>
</dbReference>
<dbReference type="InterPro" id="IPR038737">
    <property type="entry name" value="SF3b_su1-like"/>
</dbReference>
<dbReference type="PANTHER" id="PTHR12097">
    <property type="entry name" value="SPLICING FACTOR 3B, SUBUNIT 1-RELATED"/>
    <property type="match status" value="1"/>
</dbReference>
<dbReference type="Pfam" id="PF22646">
    <property type="entry name" value="PPP2R1A-like_HEAT"/>
    <property type="match status" value="1"/>
</dbReference>
<dbReference type="Pfam" id="PF08920">
    <property type="entry name" value="SF3b1"/>
    <property type="match status" value="1"/>
</dbReference>
<dbReference type="SUPFAM" id="SSF48371">
    <property type="entry name" value="ARM repeat"/>
    <property type="match status" value="1"/>
</dbReference>
<organism>
    <name type="scientific">Schizosaccharomyces pombe (strain 972 / ATCC 24843)</name>
    <name type="common">Fission yeast</name>
    <dbReference type="NCBI Taxonomy" id="284812"/>
    <lineage>
        <taxon>Eukaryota</taxon>
        <taxon>Fungi</taxon>
        <taxon>Dikarya</taxon>
        <taxon>Ascomycota</taxon>
        <taxon>Taphrinomycotina</taxon>
        <taxon>Schizosaccharomycetes</taxon>
        <taxon>Schizosaccharomycetales</taxon>
        <taxon>Schizosaccharomycetaceae</taxon>
        <taxon>Schizosaccharomyces</taxon>
    </lineage>
</organism>
<protein>
    <recommendedName>
        <fullName>U2 snRNP component prp10</fullName>
    </recommendedName>
</protein>
<accession>Q10178</accession>
<accession>Q9USE7</accession>
<gene>
    <name type="primary">prp10</name>
    <name type="synonym">sap155</name>
    <name type="ORF">SPAC27F1.09c</name>
</gene>